<evidence type="ECO:0000255" key="1">
    <source>
        <dbReference type="HAMAP-Rule" id="MF_01306"/>
    </source>
</evidence>
<evidence type="ECO:0000256" key="2">
    <source>
        <dbReference type="SAM" id="MobiDB-lite"/>
    </source>
</evidence>
<evidence type="ECO:0000305" key="3"/>
<organism>
    <name type="scientific">Cereibacter sphaeroides (strain ATCC 17023 / DSM 158 / JCM 6121 / CCUG 31486 / LMG 2827 / NBRC 12203 / NCIMB 8253 / ATH 2.4.1.)</name>
    <name type="common">Rhodobacter sphaeroides</name>
    <dbReference type="NCBI Taxonomy" id="272943"/>
    <lineage>
        <taxon>Bacteria</taxon>
        <taxon>Pseudomonadati</taxon>
        <taxon>Pseudomonadota</taxon>
        <taxon>Alphaproteobacteria</taxon>
        <taxon>Rhodobacterales</taxon>
        <taxon>Paracoccaceae</taxon>
        <taxon>Cereibacter</taxon>
    </lineage>
</organism>
<dbReference type="EMBL" id="CP000143">
    <property type="protein sequence ID" value="ABA78438.1"/>
    <property type="molecule type" value="Genomic_DNA"/>
</dbReference>
<dbReference type="RefSeq" id="WP_002719445.1">
    <property type="nucleotide sequence ID" value="NZ_CP030271.1"/>
</dbReference>
<dbReference type="RefSeq" id="YP_352339.1">
    <property type="nucleotide sequence ID" value="NC_007493.2"/>
</dbReference>
<dbReference type="SMR" id="Q3J446"/>
<dbReference type="STRING" id="272943.RSP_2283"/>
<dbReference type="EnsemblBacteria" id="ABA78438">
    <property type="protein sequence ID" value="ABA78438"/>
    <property type="gene ID" value="RSP_2283"/>
</dbReference>
<dbReference type="GeneID" id="67446056"/>
<dbReference type="KEGG" id="rsp:RSP_2283"/>
<dbReference type="PATRIC" id="fig|272943.9.peg.1193"/>
<dbReference type="eggNOG" id="COG0522">
    <property type="taxonomic scope" value="Bacteria"/>
</dbReference>
<dbReference type="OrthoDB" id="9803672at2"/>
<dbReference type="PhylomeDB" id="Q3J446"/>
<dbReference type="Proteomes" id="UP000002703">
    <property type="component" value="Chromosome 1"/>
</dbReference>
<dbReference type="GO" id="GO:0015935">
    <property type="term" value="C:small ribosomal subunit"/>
    <property type="evidence" value="ECO:0007669"/>
    <property type="project" value="InterPro"/>
</dbReference>
<dbReference type="GO" id="GO:0019843">
    <property type="term" value="F:rRNA binding"/>
    <property type="evidence" value="ECO:0007669"/>
    <property type="project" value="UniProtKB-UniRule"/>
</dbReference>
<dbReference type="GO" id="GO:0003735">
    <property type="term" value="F:structural constituent of ribosome"/>
    <property type="evidence" value="ECO:0007669"/>
    <property type="project" value="InterPro"/>
</dbReference>
<dbReference type="GO" id="GO:0042274">
    <property type="term" value="P:ribosomal small subunit biogenesis"/>
    <property type="evidence" value="ECO:0007669"/>
    <property type="project" value="TreeGrafter"/>
</dbReference>
<dbReference type="GO" id="GO:0006412">
    <property type="term" value="P:translation"/>
    <property type="evidence" value="ECO:0007669"/>
    <property type="project" value="UniProtKB-UniRule"/>
</dbReference>
<dbReference type="CDD" id="cd00165">
    <property type="entry name" value="S4"/>
    <property type="match status" value="1"/>
</dbReference>
<dbReference type="FunFam" id="3.10.290.10:FF:000001">
    <property type="entry name" value="30S ribosomal protein S4"/>
    <property type="match status" value="1"/>
</dbReference>
<dbReference type="Gene3D" id="1.10.1050.10">
    <property type="entry name" value="Ribosomal Protein S4 Delta 41, Chain A, domain 1"/>
    <property type="match status" value="1"/>
</dbReference>
<dbReference type="Gene3D" id="3.10.290.10">
    <property type="entry name" value="RNA-binding S4 domain"/>
    <property type="match status" value="1"/>
</dbReference>
<dbReference type="HAMAP" id="MF_01306_B">
    <property type="entry name" value="Ribosomal_uS4_B"/>
    <property type="match status" value="1"/>
</dbReference>
<dbReference type="InterPro" id="IPR022801">
    <property type="entry name" value="Ribosomal_uS4"/>
</dbReference>
<dbReference type="InterPro" id="IPR005709">
    <property type="entry name" value="Ribosomal_uS4_bac-type"/>
</dbReference>
<dbReference type="InterPro" id="IPR018079">
    <property type="entry name" value="Ribosomal_uS4_CS"/>
</dbReference>
<dbReference type="InterPro" id="IPR001912">
    <property type="entry name" value="Ribosomal_uS4_N"/>
</dbReference>
<dbReference type="InterPro" id="IPR002942">
    <property type="entry name" value="S4_RNA-bd"/>
</dbReference>
<dbReference type="InterPro" id="IPR036986">
    <property type="entry name" value="S4_RNA-bd_sf"/>
</dbReference>
<dbReference type="NCBIfam" id="NF003717">
    <property type="entry name" value="PRK05327.1"/>
    <property type="match status" value="1"/>
</dbReference>
<dbReference type="NCBIfam" id="TIGR01017">
    <property type="entry name" value="rpsD_bact"/>
    <property type="match status" value="1"/>
</dbReference>
<dbReference type="PANTHER" id="PTHR11831">
    <property type="entry name" value="30S 40S RIBOSOMAL PROTEIN"/>
    <property type="match status" value="1"/>
</dbReference>
<dbReference type="PANTHER" id="PTHR11831:SF4">
    <property type="entry name" value="SMALL RIBOSOMAL SUBUNIT PROTEIN US4M"/>
    <property type="match status" value="1"/>
</dbReference>
<dbReference type="Pfam" id="PF00163">
    <property type="entry name" value="Ribosomal_S4"/>
    <property type="match status" value="1"/>
</dbReference>
<dbReference type="Pfam" id="PF01479">
    <property type="entry name" value="S4"/>
    <property type="match status" value="1"/>
</dbReference>
<dbReference type="SMART" id="SM01390">
    <property type="entry name" value="Ribosomal_S4"/>
    <property type="match status" value="1"/>
</dbReference>
<dbReference type="SMART" id="SM00363">
    <property type="entry name" value="S4"/>
    <property type="match status" value="1"/>
</dbReference>
<dbReference type="SUPFAM" id="SSF55174">
    <property type="entry name" value="Alpha-L RNA-binding motif"/>
    <property type="match status" value="1"/>
</dbReference>
<dbReference type="PROSITE" id="PS00632">
    <property type="entry name" value="RIBOSOMAL_S4"/>
    <property type="match status" value="1"/>
</dbReference>
<dbReference type="PROSITE" id="PS50889">
    <property type="entry name" value="S4"/>
    <property type="match status" value="1"/>
</dbReference>
<name>RS4_CERS4</name>
<accession>Q3J446</accession>
<keyword id="KW-1185">Reference proteome</keyword>
<keyword id="KW-0687">Ribonucleoprotein</keyword>
<keyword id="KW-0689">Ribosomal protein</keyword>
<keyword id="KW-0694">RNA-binding</keyword>
<keyword id="KW-0699">rRNA-binding</keyword>
<comment type="function">
    <text evidence="1">One of the primary rRNA binding proteins, it binds directly to 16S rRNA where it nucleates assembly of the body of the 30S subunit.</text>
</comment>
<comment type="function">
    <text evidence="1">With S5 and S12 plays an important role in translational accuracy.</text>
</comment>
<comment type="subunit">
    <text evidence="1">Part of the 30S ribosomal subunit. Contacts protein S5. The interaction surface between S4 and S5 is involved in control of translational fidelity.</text>
</comment>
<comment type="similarity">
    <text evidence="1">Belongs to the universal ribosomal protein uS4 family.</text>
</comment>
<feature type="chain" id="PRO_0000228920" description="Small ribosomal subunit protein uS4">
    <location>
        <begin position="1"/>
        <end position="206"/>
    </location>
</feature>
<feature type="domain" description="S4 RNA-binding" evidence="1">
    <location>
        <begin position="94"/>
        <end position="154"/>
    </location>
</feature>
<feature type="region of interest" description="Disordered" evidence="2">
    <location>
        <begin position="15"/>
        <end position="46"/>
    </location>
</feature>
<protein>
    <recommendedName>
        <fullName evidence="1">Small ribosomal subunit protein uS4</fullName>
    </recommendedName>
    <alternativeName>
        <fullName evidence="3">30S ribosomal protein S4</fullName>
    </alternativeName>
</protein>
<sequence length="206" mass="23671">MTKRTSAKYKIDRRMGENIWGRPKSPVNKREYGPGQHGQRRKNKLSDFGTQLRAKQKLKGYYGDLTEKQFRKIFAEAERVKGDTGEMLVGLLERRLDAIVYRAKFVPTIFAARQFVNHGHVTVNGQRVNIGSYRCKEGDVIQVREKSRQLALVLEATQLAERDVPDYIEVDYSKMTATFVRTPGLGDVPYPVQMEPNLVVEFYAKN</sequence>
<gene>
    <name evidence="1" type="primary">rpsD</name>
    <name type="ordered locus">RHOS4_08700</name>
    <name type="ORF">RSP_2283</name>
</gene>
<reference key="1">
    <citation type="submission" date="2005-09" db="EMBL/GenBank/DDBJ databases">
        <title>Complete sequence of chromosome 1 of Rhodobacter sphaeroides 2.4.1.</title>
        <authorList>
            <person name="Copeland A."/>
            <person name="Lucas S."/>
            <person name="Lapidus A."/>
            <person name="Barry K."/>
            <person name="Detter J.C."/>
            <person name="Glavina T."/>
            <person name="Hammon N."/>
            <person name="Israni S."/>
            <person name="Pitluck S."/>
            <person name="Richardson P."/>
            <person name="Mackenzie C."/>
            <person name="Choudhary M."/>
            <person name="Larimer F."/>
            <person name="Hauser L.J."/>
            <person name="Land M."/>
            <person name="Donohue T.J."/>
            <person name="Kaplan S."/>
        </authorList>
    </citation>
    <scope>NUCLEOTIDE SEQUENCE [LARGE SCALE GENOMIC DNA]</scope>
    <source>
        <strain>ATCC 17023 / DSM 158 / JCM 6121 / CCUG 31486 / LMG 2827 / NBRC 12203 / NCIMB 8253 / ATH 2.4.1.</strain>
    </source>
</reference>
<proteinExistence type="inferred from homology"/>